<gene>
    <name type="primary">His1</name>
</gene>
<gene>
    <name type="primary">His1:CG31617</name>
    <name type="ORF">CG31617</name>
</gene>
<gene>
    <name type="primary">His1:CG33804</name>
    <name type="ORF">CG33804</name>
</gene>
<gene>
    <name type="primary">His1:CG33810</name>
    <name type="ORF">CG33810</name>
</gene>
<gene>
    <name type="primary">His1:CG33813</name>
    <name type="ORF">CG33813</name>
</gene>
<gene>
    <name type="primary">His1:CG33816</name>
    <name type="ORF">CG33816</name>
</gene>
<gene>
    <name type="primary">His1:CG33819</name>
    <name type="ORF">CG33819</name>
</gene>
<gene>
    <name type="primary">His1:CG33822</name>
    <name type="ORF">CG33822</name>
</gene>
<gene>
    <name type="primary">His1:CG33825</name>
    <name type="ORF">CG33825</name>
</gene>
<gene>
    <name type="primary">His1:CG33828</name>
    <name type="ORF">CG33828</name>
</gene>
<gene>
    <name type="primary">His1:CG33831</name>
    <name type="ORF">CG33831</name>
</gene>
<gene>
    <name type="primary">His1:CG33837</name>
    <name type="ORF">CG33837</name>
</gene>
<gene>
    <name type="primary">His1:CG33840</name>
    <name type="ORF">CG33840</name>
</gene>
<gene>
    <name type="primary">His1:CG33843</name>
    <name type="ORF">CG33843</name>
</gene>
<gene>
    <name type="primary">His1:CG33846</name>
    <name type="ORF">CG33846</name>
</gene>
<gene>
    <name type="primary">His1:CG33849</name>
    <name type="ORF">CG33849</name>
</gene>
<gene>
    <name type="primary">His1:CG33852</name>
    <name type="ORF">CG33852</name>
</gene>
<gene>
    <name type="primary">His1:CG33864</name>
    <name type="ORF">CG33864</name>
</gene>
<accession>P02255</accession>
<accession>Q4ABD3</accession>
<proteinExistence type="evidence at protein level"/>
<organism>
    <name type="scientific">Drosophila melanogaster</name>
    <name type="common">Fruit fly</name>
    <dbReference type="NCBI Taxonomy" id="7227"/>
    <lineage>
        <taxon>Eukaryota</taxon>
        <taxon>Metazoa</taxon>
        <taxon>Ecdysozoa</taxon>
        <taxon>Arthropoda</taxon>
        <taxon>Hexapoda</taxon>
        <taxon>Insecta</taxon>
        <taxon>Pterygota</taxon>
        <taxon>Neoptera</taxon>
        <taxon>Endopterygota</taxon>
        <taxon>Diptera</taxon>
        <taxon>Brachycera</taxon>
        <taxon>Muscomorpha</taxon>
        <taxon>Ephydroidea</taxon>
        <taxon>Drosophilidae</taxon>
        <taxon>Drosophila</taxon>
        <taxon>Sophophora</taxon>
    </lineage>
</organism>
<feature type="chain" id="PRO_0000195961" description="Histone H1">
    <location>
        <begin position="1"/>
        <end position="256"/>
    </location>
</feature>
<feature type="domain" description="H15" evidence="1">
    <location>
        <begin position="45"/>
        <end position="119"/>
    </location>
</feature>
<feature type="region of interest" description="Disordered" evidence="2">
    <location>
        <begin position="1"/>
        <end position="53"/>
    </location>
</feature>
<feature type="region of interest" description="Disordered" evidence="2">
    <location>
        <begin position="108"/>
        <end position="256"/>
    </location>
</feature>
<feature type="compositionally biased region" description="Low complexity" evidence="2">
    <location>
        <begin position="1"/>
        <end position="19"/>
    </location>
</feature>
<feature type="compositionally biased region" description="Low complexity" evidence="2">
    <location>
        <begin position="27"/>
        <end position="43"/>
    </location>
</feature>
<feature type="compositionally biased region" description="Basic and acidic residues" evidence="2">
    <location>
        <begin position="121"/>
        <end position="140"/>
    </location>
</feature>
<feature type="compositionally biased region" description="Basic and acidic residues" evidence="2">
    <location>
        <begin position="176"/>
        <end position="193"/>
    </location>
</feature>
<feature type="compositionally biased region" description="Low complexity" evidence="2">
    <location>
        <begin position="194"/>
        <end position="229"/>
    </location>
</feature>
<feature type="compositionally biased region" description="Basic residues" evidence="2">
    <location>
        <begin position="245"/>
        <end position="256"/>
    </location>
</feature>
<feature type="modified residue" description="Phosphoserine" evidence="4">
    <location>
        <position position="11"/>
    </location>
</feature>
<keyword id="KW-0158">Chromosome</keyword>
<keyword id="KW-0903">Direct protein sequencing</keyword>
<keyword id="KW-0238">DNA-binding</keyword>
<keyword id="KW-0539">Nucleus</keyword>
<keyword id="KW-0597">Phosphoprotein</keyword>
<keyword id="KW-1185">Reference proteome</keyword>
<dbReference type="EMBL" id="X04073">
    <property type="protein sequence ID" value="CAA27716.1"/>
    <property type="molecule type" value="Genomic_DNA"/>
</dbReference>
<dbReference type="EMBL" id="X14215">
    <property type="protein sequence ID" value="CAA32433.1"/>
    <property type="molecule type" value="Genomic_DNA"/>
</dbReference>
<dbReference type="EMBL" id="AE014134">
    <property type="protein sequence ID" value="AAN11123.1"/>
    <property type="molecule type" value="Genomic_DNA"/>
</dbReference>
<dbReference type="EMBL" id="AE014134">
    <property type="protein sequence ID" value="AAZ66482.1"/>
    <property type="molecule type" value="Genomic_DNA"/>
</dbReference>
<dbReference type="EMBL" id="AE014134">
    <property type="protein sequence ID" value="AAZ66491.1"/>
    <property type="molecule type" value="Genomic_DNA"/>
</dbReference>
<dbReference type="EMBL" id="AE014134">
    <property type="protein sequence ID" value="AAZ66495.1"/>
    <property type="molecule type" value="Genomic_DNA"/>
</dbReference>
<dbReference type="EMBL" id="AE014134">
    <property type="protein sequence ID" value="AAZ66500.1"/>
    <property type="molecule type" value="Genomic_DNA"/>
</dbReference>
<dbReference type="EMBL" id="AE014134">
    <property type="protein sequence ID" value="AAZ66505.1"/>
    <property type="molecule type" value="Genomic_DNA"/>
</dbReference>
<dbReference type="EMBL" id="AE014134">
    <property type="protein sequence ID" value="AAZ66510.1"/>
    <property type="molecule type" value="Genomic_DNA"/>
</dbReference>
<dbReference type="EMBL" id="AE014134">
    <property type="protein sequence ID" value="AAZ66515.1"/>
    <property type="molecule type" value="Genomic_DNA"/>
</dbReference>
<dbReference type="EMBL" id="AE014134">
    <property type="protein sequence ID" value="AAZ66520.1"/>
    <property type="molecule type" value="Genomic_DNA"/>
</dbReference>
<dbReference type="EMBL" id="AE014134">
    <property type="protein sequence ID" value="AAZ66525.1"/>
    <property type="molecule type" value="Genomic_DNA"/>
</dbReference>
<dbReference type="EMBL" id="AE014134">
    <property type="protein sequence ID" value="AAZ66535.1"/>
    <property type="molecule type" value="Genomic_DNA"/>
</dbReference>
<dbReference type="EMBL" id="AE014134">
    <property type="protein sequence ID" value="AAZ66540.1"/>
    <property type="molecule type" value="Genomic_DNA"/>
</dbReference>
<dbReference type="EMBL" id="AE014134">
    <property type="protein sequence ID" value="AAZ66545.1"/>
    <property type="molecule type" value="Genomic_DNA"/>
</dbReference>
<dbReference type="EMBL" id="AE014134">
    <property type="protein sequence ID" value="AAZ66555.1"/>
    <property type="molecule type" value="Genomic_DNA"/>
</dbReference>
<dbReference type="EMBL" id="AE014134">
    <property type="protein sequence ID" value="AAZ66550.1"/>
    <property type="molecule type" value="Genomic_DNA"/>
</dbReference>
<dbReference type="EMBL" id="AE014134">
    <property type="protein sequence ID" value="AAZ66560.1"/>
    <property type="molecule type" value="Genomic_DNA"/>
</dbReference>
<dbReference type="EMBL" id="AE014134">
    <property type="protein sequence ID" value="AAZ66580.1"/>
    <property type="molecule type" value="Genomic_DNA"/>
</dbReference>
<dbReference type="EMBL" id="X60225">
    <property type="protein sequence ID" value="CAA42786.1"/>
    <property type="molecule type" value="Genomic_DNA"/>
</dbReference>
<dbReference type="PIR" id="A02585">
    <property type="entry name" value="HSFF1"/>
</dbReference>
<dbReference type="PIR" id="S07371">
    <property type="entry name" value="S07371"/>
</dbReference>
<dbReference type="RefSeq" id="NP_001027286.1">
    <property type="nucleotide sequence ID" value="NM_001032115.2"/>
</dbReference>
<dbReference type="RefSeq" id="NP_001027295.1">
    <property type="nucleotide sequence ID" value="NM_001032124.2"/>
</dbReference>
<dbReference type="RefSeq" id="NP_001027299.1">
    <property type="nucleotide sequence ID" value="NM_001032128.2"/>
</dbReference>
<dbReference type="RefSeq" id="NP_001027304.1">
    <property type="nucleotide sequence ID" value="NM_001032133.2"/>
</dbReference>
<dbReference type="RefSeq" id="NP_001027309.1">
    <property type="nucleotide sequence ID" value="NM_001032138.2"/>
</dbReference>
<dbReference type="RefSeq" id="NP_001027314.1">
    <property type="nucleotide sequence ID" value="NM_001032143.2"/>
</dbReference>
<dbReference type="RefSeq" id="NP_001027319.1">
    <property type="nucleotide sequence ID" value="NM_001032148.2"/>
</dbReference>
<dbReference type="RefSeq" id="NP_001027324.1">
    <property type="nucleotide sequence ID" value="NM_001032153.2"/>
</dbReference>
<dbReference type="RefSeq" id="NP_001027329.1">
    <property type="nucleotide sequence ID" value="NM_001032158.2"/>
</dbReference>
<dbReference type="RefSeq" id="NP_001027339.1">
    <property type="nucleotide sequence ID" value="NM_001032168.2"/>
</dbReference>
<dbReference type="RefSeq" id="NP_001027344.1">
    <property type="nucleotide sequence ID" value="NM_001032173.2"/>
</dbReference>
<dbReference type="RefSeq" id="NP_001027349.1">
    <property type="nucleotide sequence ID" value="NM_001032178.2"/>
</dbReference>
<dbReference type="RefSeq" id="NP_001027354.1">
    <property type="nucleotide sequence ID" value="NM_001032183.2"/>
</dbReference>
<dbReference type="RefSeq" id="NP_001027359.1">
    <property type="nucleotide sequence ID" value="NM_001032188.2"/>
</dbReference>
<dbReference type="RefSeq" id="NP_001027364.1">
    <property type="nucleotide sequence ID" value="NM_001032193.2"/>
</dbReference>
<dbReference type="RefSeq" id="NP_001027384.1">
    <property type="nucleotide sequence ID" value="NM_001032213.2"/>
</dbReference>
<dbReference type="RefSeq" id="NP_724341.1">
    <property type="nucleotide sequence ID" value="NM_165380.4"/>
</dbReference>
<dbReference type="SMR" id="P02255"/>
<dbReference type="BioGRID" id="534006">
    <property type="interactions" value="1"/>
</dbReference>
<dbReference type="BioGRID" id="534312">
    <property type="interactions" value="20"/>
</dbReference>
<dbReference type="BioGRID" id="77145">
    <property type="interactions" value="7"/>
</dbReference>
<dbReference type="DIP" id="DIP-61415N"/>
<dbReference type="FunCoup" id="P02255">
    <property type="interactions" value="104"/>
</dbReference>
<dbReference type="IntAct" id="P02255">
    <property type="interactions" value="13"/>
</dbReference>
<dbReference type="STRING" id="7227.FBpp0085248"/>
<dbReference type="GlyGen" id="P02255">
    <property type="glycosylation" value="1 site"/>
</dbReference>
<dbReference type="iPTMnet" id="P02255"/>
<dbReference type="PaxDb" id="7227-FBpp0085248"/>
<dbReference type="ABCD" id="P02255">
    <property type="antibodies" value="2 sequenced antibodies"/>
</dbReference>
<dbReference type="DNASU" id="318854"/>
<dbReference type="EnsemblMetazoa" id="FBtr0085892">
    <property type="protein sequence ID" value="FBpp0085248"/>
    <property type="gene ID" value="FBgn0051617"/>
</dbReference>
<dbReference type="EnsemblMetazoa" id="FBtr0091808">
    <property type="protein sequence ID" value="FBpp0091052"/>
    <property type="gene ID" value="FBgn0053804"/>
</dbReference>
<dbReference type="EnsemblMetazoa" id="FBtr0091814">
    <property type="protein sequence ID" value="FBpp0091057"/>
    <property type="gene ID" value="FBgn0053810"/>
</dbReference>
<dbReference type="EnsemblMetazoa" id="FBtr0091817">
    <property type="protein sequence ID" value="FBpp0091059"/>
    <property type="gene ID" value="FBgn0053813"/>
</dbReference>
<dbReference type="EnsemblMetazoa" id="FBtr0091820">
    <property type="protein sequence ID" value="FBpp0091062"/>
    <property type="gene ID" value="FBgn0053816"/>
</dbReference>
<dbReference type="EnsemblMetazoa" id="FBtr0091823">
    <property type="protein sequence ID" value="FBpp0091065"/>
    <property type="gene ID" value="FBgn0053819"/>
</dbReference>
<dbReference type="EnsemblMetazoa" id="FBtr0091826">
    <property type="protein sequence ID" value="FBpp0091068"/>
    <property type="gene ID" value="FBgn0053822"/>
</dbReference>
<dbReference type="EnsemblMetazoa" id="FBtr0091829">
    <property type="protein sequence ID" value="FBpp0091071"/>
    <property type="gene ID" value="FBgn0053825"/>
</dbReference>
<dbReference type="EnsemblMetazoa" id="FBtr0091832">
    <property type="protein sequence ID" value="FBpp0091074"/>
    <property type="gene ID" value="FBgn0053828"/>
</dbReference>
<dbReference type="EnsemblMetazoa" id="FBtr0091835">
    <property type="protein sequence ID" value="FBpp0091077"/>
    <property type="gene ID" value="FBgn0053831"/>
</dbReference>
<dbReference type="EnsemblMetazoa" id="FBtr0091841">
    <property type="protein sequence ID" value="FBpp0091083"/>
    <property type="gene ID" value="FBgn0053837"/>
</dbReference>
<dbReference type="EnsemblMetazoa" id="FBtr0091844">
    <property type="protein sequence ID" value="FBpp0091086"/>
    <property type="gene ID" value="FBgn0053840"/>
</dbReference>
<dbReference type="EnsemblMetazoa" id="FBtr0091847">
    <property type="protein sequence ID" value="FBpp0091089"/>
    <property type="gene ID" value="FBgn0053843"/>
</dbReference>
<dbReference type="EnsemblMetazoa" id="FBtr0091850">
    <property type="protein sequence ID" value="FBpp0091092"/>
    <property type="gene ID" value="FBgn0053846"/>
</dbReference>
<dbReference type="EnsemblMetazoa" id="FBtr0091853">
    <property type="protein sequence ID" value="FBpp0091095"/>
    <property type="gene ID" value="FBgn0053849"/>
</dbReference>
<dbReference type="EnsemblMetazoa" id="FBtr0091856">
    <property type="protein sequence ID" value="FBpp0091098"/>
    <property type="gene ID" value="FBgn0053852"/>
</dbReference>
<dbReference type="EnsemblMetazoa" id="FBtr0091868">
    <property type="protein sequence ID" value="FBpp0091110"/>
    <property type="gene ID" value="FBgn0053864"/>
</dbReference>
<dbReference type="GeneID" id="318854"/>
<dbReference type="GeneID" id="3771803"/>
<dbReference type="GeneID" id="3771816"/>
<dbReference type="GeneID" id="3771818"/>
<dbReference type="GeneID" id="3771838"/>
<dbReference type="GeneID" id="3771879"/>
<dbReference type="GeneID" id="3771910"/>
<dbReference type="GeneID" id="3771912"/>
<dbReference type="GeneID" id="3771981"/>
<dbReference type="GeneID" id="3772004"/>
<dbReference type="GeneID" id="3772075"/>
<dbReference type="GeneID" id="3772077"/>
<dbReference type="GeneID" id="3772225"/>
<dbReference type="GeneID" id="3772409"/>
<dbReference type="GeneID" id="3772665"/>
<dbReference type="GeneID" id="3772702"/>
<dbReference type="GeneID" id="3772715"/>
<dbReference type="KEGG" id="dme:Dmel_CG31617"/>
<dbReference type="KEGG" id="dme:Dmel_CG33804"/>
<dbReference type="KEGG" id="dme:Dmel_CG33810"/>
<dbReference type="KEGG" id="dme:Dmel_CG33813"/>
<dbReference type="KEGG" id="dme:Dmel_CG33816"/>
<dbReference type="KEGG" id="dme:Dmel_CG33819"/>
<dbReference type="KEGG" id="dme:Dmel_CG33822"/>
<dbReference type="KEGG" id="dme:Dmel_CG33825"/>
<dbReference type="KEGG" id="dme:Dmel_CG33828"/>
<dbReference type="KEGG" id="dme:Dmel_CG33831"/>
<dbReference type="KEGG" id="dme:Dmel_CG33837"/>
<dbReference type="KEGG" id="dme:Dmel_CG33840"/>
<dbReference type="KEGG" id="dme:Dmel_CG33843"/>
<dbReference type="KEGG" id="dme:Dmel_CG33846"/>
<dbReference type="KEGG" id="dme:Dmel_CG33849"/>
<dbReference type="KEGG" id="dme:Dmel_CG33852"/>
<dbReference type="KEGG" id="dme:Dmel_CG33864"/>
<dbReference type="UCSC" id="CG31617-RA">
    <property type="organism name" value="d. melanogaster"/>
</dbReference>
<dbReference type="AGR" id="FB:FBgn0001195"/>
<dbReference type="AGR" id="FB:FBgn0051617"/>
<dbReference type="AGR" id="FB:FBgn0053804"/>
<dbReference type="AGR" id="FB:FBgn0053810"/>
<dbReference type="AGR" id="FB:FBgn0053813"/>
<dbReference type="AGR" id="FB:FBgn0053816"/>
<dbReference type="AGR" id="FB:FBgn0053819"/>
<dbReference type="AGR" id="FB:FBgn0053822"/>
<dbReference type="AGR" id="FB:FBgn0053825"/>
<dbReference type="AGR" id="FB:FBgn0053828"/>
<dbReference type="AGR" id="FB:FBgn0053831"/>
<dbReference type="AGR" id="FB:FBgn0053837"/>
<dbReference type="AGR" id="FB:FBgn0053840"/>
<dbReference type="AGR" id="FB:FBgn0053843"/>
<dbReference type="AGR" id="FB:FBgn0053846"/>
<dbReference type="AGR" id="FB:FBgn0053849"/>
<dbReference type="AGR" id="FB:FBgn0053852"/>
<dbReference type="AGR" id="FB:FBgn0053864"/>
<dbReference type="CTD" id="318854"/>
<dbReference type="CTD" id="3771803"/>
<dbReference type="CTD" id="3771816"/>
<dbReference type="CTD" id="3771818"/>
<dbReference type="CTD" id="3771838"/>
<dbReference type="CTD" id="3771879"/>
<dbReference type="CTD" id="3771910"/>
<dbReference type="CTD" id="3771912"/>
<dbReference type="CTD" id="3771981"/>
<dbReference type="CTD" id="3772004"/>
<dbReference type="CTD" id="3772075"/>
<dbReference type="CTD" id="3772077"/>
<dbReference type="CTD" id="3772225"/>
<dbReference type="CTD" id="3772409"/>
<dbReference type="CTD" id="3772665"/>
<dbReference type="CTD" id="3772702"/>
<dbReference type="CTD" id="3772715"/>
<dbReference type="FlyBase" id="FBgn0001195">
    <property type="gene designation" value="His1"/>
</dbReference>
<dbReference type="FlyBase" id="FBgn0051617">
    <property type="gene designation" value="His1:CG31617"/>
</dbReference>
<dbReference type="FlyBase" id="FBgn0053804">
    <property type="gene designation" value="His1:CG33804"/>
</dbReference>
<dbReference type="FlyBase" id="FBgn0053810">
    <property type="gene designation" value="His1:CG33810"/>
</dbReference>
<dbReference type="FlyBase" id="FBgn0053813">
    <property type="gene designation" value="His1:CG33813"/>
</dbReference>
<dbReference type="FlyBase" id="FBgn0053816">
    <property type="gene designation" value="His1:CG33816"/>
</dbReference>
<dbReference type="FlyBase" id="FBgn0053819">
    <property type="gene designation" value="His1:CG33819"/>
</dbReference>
<dbReference type="FlyBase" id="FBgn0053822">
    <property type="gene designation" value="His1:CG33822"/>
</dbReference>
<dbReference type="FlyBase" id="FBgn0053825">
    <property type="gene designation" value="His1:CG33825"/>
</dbReference>
<dbReference type="FlyBase" id="FBgn0053828">
    <property type="gene designation" value="His1:CG33828"/>
</dbReference>
<dbReference type="FlyBase" id="FBgn0053831">
    <property type="gene designation" value="His1:CG33831"/>
</dbReference>
<dbReference type="FlyBase" id="FBgn0053837">
    <property type="gene designation" value="His1:CG33837"/>
</dbReference>
<dbReference type="FlyBase" id="FBgn0053840">
    <property type="gene designation" value="His1:CG33840"/>
</dbReference>
<dbReference type="FlyBase" id="FBgn0053843">
    <property type="gene designation" value="His1:CG33843"/>
</dbReference>
<dbReference type="FlyBase" id="FBgn0053846">
    <property type="gene designation" value="His1:CG33846"/>
</dbReference>
<dbReference type="FlyBase" id="FBgn0053849">
    <property type="gene designation" value="His1:CG33849"/>
</dbReference>
<dbReference type="FlyBase" id="FBgn0053852">
    <property type="gene designation" value="His1:CG33852"/>
</dbReference>
<dbReference type="FlyBase" id="FBgn0053864">
    <property type="gene designation" value="His1:CG33864"/>
</dbReference>
<dbReference type="VEuPathDB" id="VectorBase:FBgn0051617"/>
<dbReference type="VEuPathDB" id="VectorBase:FBgn0053804"/>
<dbReference type="VEuPathDB" id="VectorBase:FBgn0053810"/>
<dbReference type="VEuPathDB" id="VectorBase:FBgn0053813"/>
<dbReference type="VEuPathDB" id="VectorBase:FBgn0053816"/>
<dbReference type="VEuPathDB" id="VectorBase:FBgn0053819"/>
<dbReference type="VEuPathDB" id="VectorBase:FBgn0053822"/>
<dbReference type="VEuPathDB" id="VectorBase:FBgn0053825"/>
<dbReference type="VEuPathDB" id="VectorBase:FBgn0053828"/>
<dbReference type="VEuPathDB" id="VectorBase:FBgn0053831"/>
<dbReference type="VEuPathDB" id="VectorBase:FBgn0053837"/>
<dbReference type="VEuPathDB" id="VectorBase:FBgn0053840"/>
<dbReference type="VEuPathDB" id="VectorBase:FBgn0053843"/>
<dbReference type="VEuPathDB" id="VectorBase:FBgn0053846"/>
<dbReference type="VEuPathDB" id="VectorBase:FBgn0053849"/>
<dbReference type="VEuPathDB" id="VectorBase:FBgn0053852"/>
<dbReference type="VEuPathDB" id="VectorBase:FBgn0053864"/>
<dbReference type="eggNOG" id="KOG4012">
    <property type="taxonomic scope" value="Eukaryota"/>
</dbReference>
<dbReference type="GeneTree" id="ENSGT00940000164370"/>
<dbReference type="HOGENOM" id="CLU_052897_1_0_1"/>
<dbReference type="InParanoid" id="P02255"/>
<dbReference type="OMA" id="TTSAXPL"/>
<dbReference type="OrthoDB" id="8251629at2759"/>
<dbReference type="PhylomeDB" id="P02255"/>
<dbReference type="SignaLink" id="P02255"/>
<dbReference type="PRO" id="PR:P02255"/>
<dbReference type="Proteomes" id="UP000000803">
    <property type="component" value="Chromosome 2L"/>
</dbReference>
<dbReference type="Bgee" id="FBgn0051617">
    <property type="expression patterns" value="Expressed in ovary and 12 other cell types or tissues"/>
</dbReference>
<dbReference type="GO" id="GO:0000785">
    <property type="term" value="C:chromatin"/>
    <property type="evidence" value="ECO:0000250"/>
    <property type="project" value="FlyBase"/>
</dbReference>
<dbReference type="GO" id="GO:0000786">
    <property type="term" value="C:nucleosome"/>
    <property type="evidence" value="ECO:0007669"/>
    <property type="project" value="InterPro"/>
</dbReference>
<dbReference type="GO" id="GO:0005634">
    <property type="term" value="C:nucleus"/>
    <property type="evidence" value="ECO:0000318"/>
    <property type="project" value="GO_Central"/>
</dbReference>
<dbReference type="GO" id="GO:0031490">
    <property type="term" value="F:chromatin DNA binding"/>
    <property type="evidence" value="ECO:0000250"/>
    <property type="project" value="FlyBase"/>
</dbReference>
<dbReference type="GO" id="GO:0003690">
    <property type="term" value="F:double-stranded DNA binding"/>
    <property type="evidence" value="ECO:0000318"/>
    <property type="project" value="GO_Central"/>
</dbReference>
<dbReference type="GO" id="GO:0031492">
    <property type="term" value="F:nucleosomal DNA binding"/>
    <property type="evidence" value="ECO:0000318"/>
    <property type="project" value="GO_Central"/>
</dbReference>
<dbReference type="GO" id="GO:0030527">
    <property type="term" value="F:structural constituent of chromatin"/>
    <property type="evidence" value="ECO:0007669"/>
    <property type="project" value="InterPro"/>
</dbReference>
<dbReference type="GO" id="GO:0030261">
    <property type="term" value="P:chromosome condensation"/>
    <property type="evidence" value="ECO:0000318"/>
    <property type="project" value="GO_Central"/>
</dbReference>
<dbReference type="GO" id="GO:0051276">
    <property type="term" value="P:chromosome organization"/>
    <property type="evidence" value="ECO:0000315"/>
    <property type="project" value="FlyBase"/>
</dbReference>
<dbReference type="GO" id="GO:0031507">
    <property type="term" value="P:heterochromatin formation"/>
    <property type="evidence" value="ECO:0000315"/>
    <property type="project" value="FlyBase"/>
</dbReference>
<dbReference type="GO" id="GO:0045910">
    <property type="term" value="P:negative regulation of DNA recombination"/>
    <property type="evidence" value="ECO:0000318"/>
    <property type="project" value="GO_Central"/>
</dbReference>
<dbReference type="GO" id="GO:0006334">
    <property type="term" value="P:nucleosome assembly"/>
    <property type="evidence" value="ECO:0007669"/>
    <property type="project" value="InterPro"/>
</dbReference>
<dbReference type="CDD" id="cd00073">
    <property type="entry name" value="H15"/>
    <property type="match status" value="1"/>
</dbReference>
<dbReference type="FunFam" id="1.10.10.10:FF:000140">
    <property type="entry name" value="Histone H1.0"/>
    <property type="match status" value="1"/>
</dbReference>
<dbReference type="Gene3D" id="1.10.10.10">
    <property type="entry name" value="Winged helix-like DNA-binding domain superfamily/Winged helix DNA-binding domain"/>
    <property type="match status" value="1"/>
</dbReference>
<dbReference type="InterPro" id="IPR005819">
    <property type="entry name" value="H1/H5"/>
</dbReference>
<dbReference type="InterPro" id="IPR005818">
    <property type="entry name" value="Histone_H1/H5_H15"/>
</dbReference>
<dbReference type="InterPro" id="IPR036388">
    <property type="entry name" value="WH-like_DNA-bd_sf"/>
</dbReference>
<dbReference type="InterPro" id="IPR036390">
    <property type="entry name" value="WH_DNA-bd_sf"/>
</dbReference>
<dbReference type="Pfam" id="PF00538">
    <property type="entry name" value="Linker_histone"/>
    <property type="match status" value="1"/>
</dbReference>
<dbReference type="PRINTS" id="PR00624">
    <property type="entry name" value="HISTONEH5"/>
</dbReference>
<dbReference type="SMART" id="SM00526">
    <property type="entry name" value="H15"/>
    <property type="match status" value="1"/>
</dbReference>
<dbReference type="SUPFAM" id="SSF46785">
    <property type="entry name" value="Winged helix' DNA-binding domain"/>
    <property type="match status" value="1"/>
</dbReference>
<dbReference type="PROSITE" id="PS51504">
    <property type="entry name" value="H15"/>
    <property type="match status" value="1"/>
</dbReference>
<sequence length="256" mass="26359">MSDSAVATSASPVAAPPATVEKKVVQKKASGSAGTKAKKASATPSHPPTQQMVDASIKNLKERGGSSLLAIKKYITATYKCDAQKLAPFIKKYLKSAVVNGKLIQTKGKGASGSFKLSASAKKEKDPKAKSKVLSAEKKVQSKKVASKKIGVSSKKTAVGAADKKPKAKKAVATKKTAENKKTEKAKAKDAKKTGIIKSKPAATKAKVTAAKPKAVVAKASKAKPAVSAKPKKTVKKASVSATAKKPKAKTTAAKK</sequence>
<evidence type="ECO:0000255" key="1">
    <source>
        <dbReference type="PROSITE-ProRule" id="PRU00837"/>
    </source>
</evidence>
<evidence type="ECO:0000256" key="2">
    <source>
        <dbReference type="SAM" id="MobiDB-lite"/>
    </source>
</evidence>
<evidence type="ECO:0000269" key="3">
    <source>
    </source>
</evidence>
<evidence type="ECO:0000269" key="4">
    <source>
    </source>
</evidence>
<name>H1_DROME</name>
<protein>
    <recommendedName>
        <fullName>Histone H1</fullName>
    </recommendedName>
</protein>
<reference key="1">
    <citation type="journal article" date="1986" name="Nucleic Acids Res.">
        <title>Nucleotide sequence of a Drosophila melanogaster H1 histone gene.</title>
        <authorList>
            <person name="Murphy T.J."/>
            <person name="Blumenfeld M."/>
        </authorList>
    </citation>
    <scope>NUCLEOTIDE SEQUENCE [GENOMIC DNA] (HIS1)</scope>
</reference>
<reference key="2">
    <citation type="journal article" date="1989" name="Nucleic Acids Res.">
        <title>tRNA derived insertion element in histone gene repeating unit of Drosophila melanogaster.</title>
        <authorList>
            <person name="Matsuo Y."/>
            <person name="Yamazaki T."/>
        </authorList>
    </citation>
    <scope>NUCLEOTIDE SEQUENCE [GENOMIC DNA] (HIS1)</scope>
    <source>
        <strain>AK-194</strain>
    </source>
</reference>
<reference key="3">
    <citation type="journal article" date="2000" name="Science">
        <title>The genome sequence of Drosophila melanogaster.</title>
        <authorList>
            <person name="Adams M.D."/>
            <person name="Celniker S.E."/>
            <person name="Holt R.A."/>
            <person name="Evans C.A."/>
            <person name="Gocayne J.D."/>
            <person name="Amanatides P.G."/>
            <person name="Scherer S.E."/>
            <person name="Li P.W."/>
            <person name="Hoskins R.A."/>
            <person name="Galle R.F."/>
            <person name="George R.A."/>
            <person name="Lewis S.E."/>
            <person name="Richards S."/>
            <person name="Ashburner M."/>
            <person name="Henderson S.N."/>
            <person name="Sutton G.G."/>
            <person name="Wortman J.R."/>
            <person name="Yandell M.D."/>
            <person name="Zhang Q."/>
            <person name="Chen L.X."/>
            <person name="Brandon R.C."/>
            <person name="Rogers Y.-H.C."/>
            <person name="Blazej R.G."/>
            <person name="Champe M."/>
            <person name="Pfeiffer B.D."/>
            <person name="Wan K.H."/>
            <person name="Doyle C."/>
            <person name="Baxter E.G."/>
            <person name="Helt G."/>
            <person name="Nelson C.R."/>
            <person name="Miklos G.L.G."/>
            <person name="Abril J.F."/>
            <person name="Agbayani A."/>
            <person name="An H.-J."/>
            <person name="Andrews-Pfannkoch C."/>
            <person name="Baldwin D."/>
            <person name="Ballew R.M."/>
            <person name="Basu A."/>
            <person name="Baxendale J."/>
            <person name="Bayraktaroglu L."/>
            <person name="Beasley E.M."/>
            <person name="Beeson K.Y."/>
            <person name="Benos P.V."/>
            <person name="Berman B.P."/>
            <person name="Bhandari D."/>
            <person name="Bolshakov S."/>
            <person name="Borkova D."/>
            <person name="Botchan M.R."/>
            <person name="Bouck J."/>
            <person name="Brokstein P."/>
            <person name="Brottier P."/>
            <person name="Burtis K.C."/>
            <person name="Busam D.A."/>
            <person name="Butler H."/>
            <person name="Cadieu E."/>
            <person name="Center A."/>
            <person name="Chandra I."/>
            <person name="Cherry J.M."/>
            <person name="Cawley S."/>
            <person name="Dahlke C."/>
            <person name="Davenport L.B."/>
            <person name="Davies P."/>
            <person name="de Pablos B."/>
            <person name="Delcher A."/>
            <person name="Deng Z."/>
            <person name="Mays A.D."/>
            <person name="Dew I."/>
            <person name="Dietz S.M."/>
            <person name="Dodson K."/>
            <person name="Doup L.E."/>
            <person name="Downes M."/>
            <person name="Dugan-Rocha S."/>
            <person name="Dunkov B.C."/>
            <person name="Dunn P."/>
            <person name="Durbin K.J."/>
            <person name="Evangelista C.C."/>
            <person name="Ferraz C."/>
            <person name="Ferriera S."/>
            <person name="Fleischmann W."/>
            <person name="Fosler C."/>
            <person name="Gabrielian A.E."/>
            <person name="Garg N.S."/>
            <person name="Gelbart W.M."/>
            <person name="Glasser K."/>
            <person name="Glodek A."/>
            <person name="Gong F."/>
            <person name="Gorrell J.H."/>
            <person name="Gu Z."/>
            <person name="Guan P."/>
            <person name="Harris M."/>
            <person name="Harris N.L."/>
            <person name="Harvey D.A."/>
            <person name="Heiman T.J."/>
            <person name="Hernandez J.R."/>
            <person name="Houck J."/>
            <person name="Hostin D."/>
            <person name="Houston K.A."/>
            <person name="Howland T.J."/>
            <person name="Wei M.-H."/>
            <person name="Ibegwam C."/>
            <person name="Jalali M."/>
            <person name="Kalush F."/>
            <person name="Karpen G.H."/>
            <person name="Ke Z."/>
            <person name="Kennison J.A."/>
            <person name="Ketchum K.A."/>
            <person name="Kimmel B.E."/>
            <person name="Kodira C.D."/>
            <person name="Kraft C.L."/>
            <person name="Kravitz S."/>
            <person name="Kulp D."/>
            <person name="Lai Z."/>
            <person name="Lasko P."/>
            <person name="Lei Y."/>
            <person name="Levitsky A.A."/>
            <person name="Li J.H."/>
            <person name="Li Z."/>
            <person name="Liang Y."/>
            <person name="Lin X."/>
            <person name="Liu X."/>
            <person name="Mattei B."/>
            <person name="McIntosh T.C."/>
            <person name="McLeod M.P."/>
            <person name="McPherson D."/>
            <person name="Merkulov G."/>
            <person name="Milshina N.V."/>
            <person name="Mobarry C."/>
            <person name="Morris J."/>
            <person name="Moshrefi A."/>
            <person name="Mount S.M."/>
            <person name="Moy M."/>
            <person name="Murphy B."/>
            <person name="Murphy L."/>
            <person name="Muzny D.M."/>
            <person name="Nelson D.L."/>
            <person name="Nelson D.R."/>
            <person name="Nelson K.A."/>
            <person name="Nixon K."/>
            <person name="Nusskern D.R."/>
            <person name="Pacleb J.M."/>
            <person name="Palazzolo M."/>
            <person name="Pittman G.S."/>
            <person name="Pan S."/>
            <person name="Pollard J."/>
            <person name="Puri V."/>
            <person name="Reese M.G."/>
            <person name="Reinert K."/>
            <person name="Remington K."/>
            <person name="Saunders R.D.C."/>
            <person name="Scheeler F."/>
            <person name="Shen H."/>
            <person name="Shue B.C."/>
            <person name="Siden-Kiamos I."/>
            <person name="Simpson M."/>
            <person name="Skupski M.P."/>
            <person name="Smith T.J."/>
            <person name="Spier E."/>
            <person name="Spradling A.C."/>
            <person name="Stapleton M."/>
            <person name="Strong R."/>
            <person name="Sun E."/>
            <person name="Svirskas R."/>
            <person name="Tector C."/>
            <person name="Turner R."/>
            <person name="Venter E."/>
            <person name="Wang A.H."/>
            <person name="Wang X."/>
            <person name="Wang Z.-Y."/>
            <person name="Wassarman D.A."/>
            <person name="Weinstock G.M."/>
            <person name="Weissenbach J."/>
            <person name="Williams S.M."/>
            <person name="Woodage T."/>
            <person name="Worley K.C."/>
            <person name="Wu D."/>
            <person name="Yang S."/>
            <person name="Yao Q.A."/>
            <person name="Ye J."/>
            <person name="Yeh R.-F."/>
            <person name="Zaveri J.S."/>
            <person name="Zhan M."/>
            <person name="Zhang G."/>
            <person name="Zhao Q."/>
            <person name="Zheng L."/>
            <person name="Zheng X.H."/>
            <person name="Zhong F.N."/>
            <person name="Zhong W."/>
            <person name="Zhou X."/>
            <person name="Zhu S.C."/>
            <person name="Zhu X."/>
            <person name="Smith H.O."/>
            <person name="Gibbs R.A."/>
            <person name="Myers E.W."/>
            <person name="Rubin G.M."/>
            <person name="Venter J.C."/>
        </authorList>
    </citation>
    <scope>NUCLEOTIDE SEQUENCE [LARGE SCALE GENOMIC DNA] (HIS1:CG31617; HIS1:CG31617; HIS1:CG33804; HIS1:CG33810; HIS1:CG33813; HIS1:CG33816; HIS1:CG33819; HIS1:CG33822; HIS1:CG33825; HIS1:CG33828; HIS1:CG33831; HIS1:CG33837; HIS1:CG33840; HIS1:CG33843; HIS1:CG33846; HIS1:CG33849; HIS1:CG33852 AND HIS1:CG33864)</scope>
    <source>
        <strain>Berkeley</strain>
    </source>
</reference>
<reference key="4">
    <citation type="journal article" date="2002" name="Genome Biol.">
        <title>Annotation of the Drosophila melanogaster euchromatic genome: a systematic review.</title>
        <authorList>
            <person name="Misra S."/>
            <person name="Crosby M.A."/>
            <person name="Mungall C.J."/>
            <person name="Matthews B.B."/>
            <person name="Campbell K.S."/>
            <person name="Hradecky P."/>
            <person name="Huang Y."/>
            <person name="Kaminker J.S."/>
            <person name="Millburn G.H."/>
            <person name="Prochnik S.E."/>
            <person name="Smith C.D."/>
            <person name="Tupy J.L."/>
            <person name="Whitfield E.J."/>
            <person name="Bayraktaroglu L."/>
            <person name="Berman B.P."/>
            <person name="Bettencourt B.R."/>
            <person name="Celniker S.E."/>
            <person name="de Grey A.D.N.J."/>
            <person name="Drysdale R.A."/>
            <person name="Harris N.L."/>
            <person name="Richter J."/>
            <person name="Russo S."/>
            <person name="Schroeder A.J."/>
            <person name="Shu S.Q."/>
            <person name="Stapleton M."/>
            <person name="Yamada C."/>
            <person name="Ashburner M."/>
            <person name="Gelbart W.M."/>
            <person name="Rubin G.M."/>
            <person name="Lewis S.E."/>
        </authorList>
    </citation>
    <scope>GENOME REANNOTATION</scope>
    <source>
        <strain>Berkeley</strain>
    </source>
</reference>
<reference key="5">
    <citation type="thesis" date="1979" institute="University of Stanford" country="United States">
        <authorList>
            <person name="Goldberg M.L."/>
        </authorList>
    </citation>
    <scope>NUCLEOTIDE SEQUENCE [GENOMIC DNA] OF 14-47 AND 63-215 (HIS1)</scope>
</reference>
<reference key="6">
    <citation type="journal article" date="1991" name="Science">
        <title>Sequence-specific antirepression of histone H1-mediated inhibition of basal RNA polymerase II transcription.</title>
        <authorList>
            <person name="Croston G.E."/>
            <person name="Kerrigan L.A."/>
            <person name="Lira L.M."/>
            <person name="Marshak D.R."/>
            <person name="Kadonaga J.T."/>
        </authorList>
    </citation>
    <scope>PROTEIN SEQUENCE OF 22-117; 125-172 AND 185-231 (HIS1)</scope>
</reference>
<reference key="7">
    <citation type="journal article" date="1992" name="EMBO J.">
        <title>In vivo topoisomerase II cleavage of the Drosophila histone and satellite III repeats: DNA sequence and structural characteristics.</title>
        <authorList>
            <person name="Kas E."/>
            <person name="Laemmli U.K."/>
        </authorList>
    </citation>
    <scope>NUCLEOTIDE SEQUENCE [GENOMIC DNA] OF 1-11 (HIS1)</scope>
</reference>
<reference key="8">
    <citation type="journal article" date="2005" name="Genes Dev.">
        <title>A histone code in meiosis: the histone kinase, NHK-1, is required for proper chromosomal architecture in Drosophila oocytes.</title>
        <authorList>
            <person name="Ivanovska I."/>
            <person name="Khandan T."/>
            <person name="Ito T."/>
            <person name="Orr-Weaver T.L."/>
        </authorList>
    </citation>
    <scope>PHOSPHORYLATION</scope>
</reference>
<reference key="9">
    <citation type="journal article" date="2007" name="Mol. Biosyst.">
        <title>An integrated chemical, mass spectrometric and computational strategy for (quantitative) phosphoproteomics: application to Drosophila melanogaster Kc167 cells.</title>
        <authorList>
            <person name="Bodenmiller B."/>
            <person name="Mueller L.N."/>
            <person name="Pedrioli P.G.A."/>
            <person name="Pflieger D."/>
            <person name="Juenger M.A."/>
            <person name="Eng J.K."/>
            <person name="Aebersold R."/>
            <person name="Tao W.A."/>
        </authorList>
    </citation>
    <scope>PHOSPHORYLATION [LARGE SCALE ANALYSIS] AT SER-11</scope>
    <scope>IDENTIFICATION BY MASS SPECTROMETRY</scope>
</reference>
<comment type="function">
    <text>Histones H1 are necessary for the condensation of nucleosome chains into higher-order structures.</text>
</comment>
<comment type="interaction">
    <interactant intactId="EBI-151629">
        <id>P02255</id>
    </interactant>
    <interactant intactId="EBI-155532">
        <id>P05205</id>
        <label>Su(var)205</label>
    </interactant>
    <organismsDiffer>false</organismsDiffer>
    <experiments>2</experiments>
</comment>
<comment type="interaction">
    <interactant intactId="EBI-151629">
        <id>P02255</id>
    </interactant>
    <interactant intactId="EBI-110378">
        <id>P45975</id>
        <label>Su(var)3-9</label>
    </interactant>
    <organismsDiffer>false</organismsDiffer>
    <experiments>4</experiments>
</comment>
<comment type="subcellular location">
    <subcellularLocation>
        <location>Nucleus</location>
    </subcellularLocation>
    <subcellularLocation>
        <location>Chromosome</location>
    </subcellularLocation>
</comment>
<comment type="PTM">
    <text evidence="3 4">Phosphorylated in oocytes during prophase I of meiosis.</text>
</comment>
<comment type="similarity">
    <text evidence="1">Belongs to the histone H1/H5 family.</text>
</comment>